<name>IHFB_RHOPT</name>
<organism>
    <name type="scientific">Rhodopseudomonas palustris (strain TIE-1)</name>
    <dbReference type="NCBI Taxonomy" id="395960"/>
    <lineage>
        <taxon>Bacteria</taxon>
        <taxon>Pseudomonadati</taxon>
        <taxon>Pseudomonadota</taxon>
        <taxon>Alphaproteobacteria</taxon>
        <taxon>Hyphomicrobiales</taxon>
        <taxon>Nitrobacteraceae</taxon>
        <taxon>Rhodopseudomonas</taxon>
    </lineage>
</organism>
<protein>
    <recommendedName>
        <fullName evidence="1">Integration host factor subunit beta</fullName>
        <shortName evidence="1">IHF-beta</shortName>
    </recommendedName>
</protein>
<accession>B3Q602</accession>
<evidence type="ECO:0000255" key="1">
    <source>
        <dbReference type="HAMAP-Rule" id="MF_00381"/>
    </source>
</evidence>
<evidence type="ECO:0000256" key="2">
    <source>
        <dbReference type="SAM" id="MobiDB-lite"/>
    </source>
</evidence>
<reference key="1">
    <citation type="submission" date="2008-05" db="EMBL/GenBank/DDBJ databases">
        <title>Complete sequence of Rhodopseudomonas palustris TIE-1.</title>
        <authorList>
            <consortium name="US DOE Joint Genome Institute"/>
            <person name="Lucas S."/>
            <person name="Copeland A."/>
            <person name="Lapidus A."/>
            <person name="Glavina del Rio T."/>
            <person name="Dalin E."/>
            <person name="Tice H."/>
            <person name="Pitluck S."/>
            <person name="Chain P."/>
            <person name="Malfatti S."/>
            <person name="Shin M."/>
            <person name="Vergez L."/>
            <person name="Lang D."/>
            <person name="Schmutz J."/>
            <person name="Larimer F."/>
            <person name="Land M."/>
            <person name="Hauser L."/>
            <person name="Kyrpides N."/>
            <person name="Mikhailova N."/>
            <person name="Emerson D."/>
            <person name="Newman D.K."/>
            <person name="Roden E."/>
            <person name="Richardson P."/>
        </authorList>
    </citation>
    <scope>NUCLEOTIDE SEQUENCE [LARGE SCALE GENOMIC DNA]</scope>
    <source>
        <strain>TIE-1</strain>
    </source>
</reference>
<feature type="chain" id="PRO_1000122233" description="Integration host factor subunit beta">
    <location>
        <begin position="1"/>
        <end position="104"/>
    </location>
</feature>
<feature type="region of interest" description="Disordered" evidence="2">
    <location>
        <begin position="83"/>
        <end position="104"/>
    </location>
</feature>
<feature type="compositionally biased region" description="Basic and acidic residues" evidence="2">
    <location>
        <begin position="83"/>
        <end position="95"/>
    </location>
</feature>
<keyword id="KW-0233">DNA recombination</keyword>
<keyword id="KW-0238">DNA-binding</keyword>
<keyword id="KW-0804">Transcription</keyword>
<keyword id="KW-0805">Transcription regulation</keyword>
<keyword id="KW-0810">Translation regulation</keyword>
<proteinExistence type="inferred from homology"/>
<comment type="function">
    <text evidence="1">This protein is one of the two subunits of integration host factor, a specific DNA-binding protein that functions in genetic recombination as well as in transcriptional and translational control.</text>
</comment>
<comment type="subunit">
    <text evidence="1">Heterodimer of an alpha and a beta chain.</text>
</comment>
<comment type="similarity">
    <text evidence="1">Belongs to the bacterial histone-like protein family.</text>
</comment>
<gene>
    <name evidence="1" type="primary">ihfB</name>
    <name evidence="1" type="synonym">himD</name>
    <name type="ordered locus">Rpal_0069</name>
</gene>
<sequence>MIKSELVQRIAEHNPHLYQRDVENIVNAILDEIVDALARGDRVELRGFGAFSVKHRPARAGRNPRTGAHVPVDQKTVPFFKTGKEMRERLNRDSGDDAPTSDTA</sequence>
<dbReference type="EMBL" id="CP001096">
    <property type="protein sequence ID" value="ACE98631.1"/>
    <property type="molecule type" value="Genomic_DNA"/>
</dbReference>
<dbReference type="RefSeq" id="WP_011155637.1">
    <property type="nucleotide sequence ID" value="NC_011004.1"/>
</dbReference>
<dbReference type="SMR" id="B3Q602"/>
<dbReference type="KEGG" id="rpt:Rpal_0069"/>
<dbReference type="HOGENOM" id="CLU_105066_2_1_5"/>
<dbReference type="OrthoDB" id="9804203at2"/>
<dbReference type="Proteomes" id="UP000001725">
    <property type="component" value="Chromosome"/>
</dbReference>
<dbReference type="GO" id="GO:0005694">
    <property type="term" value="C:chromosome"/>
    <property type="evidence" value="ECO:0007669"/>
    <property type="project" value="InterPro"/>
</dbReference>
<dbReference type="GO" id="GO:0005829">
    <property type="term" value="C:cytosol"/>
    <property type="evidence" value="ECO:0007669"/>
    <property type="project" value="TreeGrafter"/>
</dbReference>
<dbReference type="GO" id="GO:0003677">
    <property type="term" value="F:DNA binding"/>
    <property type="evidence" value="ECO:0007669"/>
    <property type="project" value="UniProtKB-UniRule"/>
</dbReference>
<dbReference type="GO" id="GO:0030527">
    <property type="term" value="F:structural constituent of chromatin"/>
    <property type="evidence" value="ECO:0007669"/>
    <property type="project" value="InterPro"/>
</dbReference>
<dbReference type="GO" id="GO:0006310">
    <property type="term" value="P:DNA recombination"/>
    <property type="evidence" value="ECO:0007669"/>
    <property type="project" value="UniProtKB-UniRule"/>
</dbReference>
<dbReference type="GO" id="GO:0006355">
    <property type="term" value="P:regulation of DNA-templated transcription"/>
    <property type="evidence" value="ECO:0007669"/>
    <property type="project" value="UniProtKB-UniRule"/>
</dbReference>
<dbReference type="GO" id="GO:0006417">
    <property type="term" value="P:regulation of translation"/>
    <property type="evidence" value="ECO:0007669"/>
    <property type="project" value="UniProtKB-UniRule"/>
</dbReference>
<dbReference type="CDD" id="cd13836">
    <property type="entry name" value="IHF_B"/>
    <property type="match status" value="1"/>
</dbReference>
<dbReference type="FunFam" id="4.10.520.10:FF:000008">
    <property type="entry name" value="Integration host factor subunit beta"/>
    <property type="match status" value="1"/>
</dbReference>
<dbReference type="Gene3D" id="4.10.520.10">
    <property type="entry name" value="IHF-like DNA-binding proteins"/>
    <property type="match status" value="1"/>
</dbReference>
<dbReference type="HAMAP" id="MF_00381">
    <property type="entry name" value="IHF_beta"/>
    <property type="match status" value="1"/>
</dbReference>
<dbReference type="InterPro" id="IPR000119">
    <property type="entry name" value="Hist_DNA-bd"/>
</dbReference>
<dbReference type="InterPro" id="IPR020816">
    <property type="entry name" value="Histone-like_DNA-bd_CS"/>
</dbReference>
<dbReference type="InterPro" id="IPR010992">
    <property type="entry name" value="IHF-like_DNA-bd_dom_sf"/>
</dbReference>
<dbReference type="InterPro" id="IPR005685">
    <property type="entry name" value="IHF_beta"/>
</dbReference>
<dbReference type="NCBIfam" id="TIGR00988">
    <property type="entry name" value="hip"/>
    <property type="match status" value="1"/>
</dbReference>
<dbReference type="NCBIfam" id="NF001222">
    <property type="entry name" value="PRK00199.1"/>
    <property type="match status" value="1"/>
</dbReference>
<dbReference type="PANTHER" id="PTHR33175">
    <property type="entry name" value="DNA-BINDING PROTEIN HU"/>
    <property type="match status" value="1"/>
</dbReference>
<dbReference type="PANTHER" id="PTHR33175:SF5">
    <property type="entry name" value="INTEGRATION HOST FACTOR SUBUNIT BETA"/>
    <property type="match status" value="1"/>
</dbReference>
<dbReference type="Pfam" id="PF00216">
    <property type="entry name" value="Bac_DNA_binding"/>
    <property type="match status" value="1"/>
</dbReference>
<dbReference type="PRINTS" id="PR01727">
    <property type="entry name" value="DNABINDINGHU"/>
</dbReference>
<dbReference type="SMART" id="SM00411">
    <property type="entry name" value="BHL"/>
    <property type="match status" value="1"/>
</dbReference>
<dbReference type="SUPFAM" id="SSF47729">
    <property type="entry name" value="IHF-like DNA-binding proteins"/>
    <property type="match status" value="1"/>
</dbReference>
<dbReference type="PROSITE" id="PS00045">
    <property type="entry name" value="HISTONE_LIKE"/>
    <property type="match status" value="1"/>
</dbReference>